<comment type="function">
    <text evidence="1">This protein is one of the early assembly proteins of the 50S ribosomal subunit, although it is not seen to bind rRNA by itself. It is important during the early stages of 50S assembly.</text>
</comment>
<comment type="subunit">
    <text evidence="1">Part of the 50S ribosomal subunit.</text>
</comment>
<comment type="similarity">
    <text evidence="1">Belongs to the universal ribosomal protein uL13 family.</text>
</comment>
<gene>
    <name evidence="1" type="primary">rplM</name>
    <name type="ordered locus">lp_1077</name>
</gene>
<dbReference type="EMBL" id="AL935263">
    <property type="protein sequence ID" value="CCC78483.1"/>
    <property type="molecule type" value="Genomic_DNA"/>
</dbReference>
<dbReference type="RefSeq" id="WP_003638098.1">
    <property type="nucleotide sequence ID" value="NC_004567.2"/>
</dbReference>
<dbReference type="RefSeq" id="YP_004888997.1">
    <property type="nucleotide sequence ID" value="NC_004567.2"/>
</dbReference>
<dbReference type="SMR" id="Q88XU8"/>
<dbReference type="STRING" id="220668.lp_1077"/>
<dbReference type="EnsemblBacteria" id="CCC78483">
    <property type="protein sequence ID" value="CCC78483"/>
    <property type="gene ID" value="lp_1077"/>
</dbReference>
<dbReference type="GeneID" id="89668585"/>
<dbReference type="KEGG" id="lpl:lp_1077"/>
<dbReference type="PATRIC" id="fig|220668.9.peg.912"/>
<dbReference type="eggNOG" id="COG0102">
    <property type="taxonomic scope" value="Bacteria"/>
</dbReference>
<dbReference type="HOGENOM" id="CLU_082184_2_1_9"/>
<dbReference type="OrthoDB" id="9801330at2"/>
<dbReference type="PhylomeDB" id="Q88XU8"/>
<dbReference type="Proteomes" id="UP000000432">
    <property type="component" value="Chromosome"/>
</dbReference>
<dbReference type="GO" id="GO:0022625">
    <property type="term" value="C:cytosolic large ribosomal subunit"/>
    <property type="evidence" value="ECO:0007669"/>
    <property type="project" value="TreeGrafter"/>
</dbReference>
<dbReference type="GO" id="GO:0003729">
    <property type="term" value="F:mRNA binding"/>
    <property type="evidence" value="ECO:0007669"/>
    <property type="project" value="TreeGrafter"/>
</dbReference>
<dbReference type="GO" id="GO:0003735">
    <property type="term" value="F:structural constituent of ribosome"/>
    <property type="evidence" value="ECO:0007669"/>
    <property type="project" value="InterPro"/>
</dbReference>
<dbReference type="GO" id="GO:0017148">
    <property type="term" value="P:negative regulation of translation"/>
    <property type="evidence" value="ECO:0007669"/>
    <property type="project" value="TreeGrafter"/>
</dbReference>
<dbReference type="GO" id="GO:0006412">
    <property type="term" value="P:translation"/>
    <property type="evidence" value="ECO:0007669"/>
    <property type="project" value="UniProtKB-UniRule"/>
</dbReference>
<dbReference type="CDD" id="cd00392">
    <property type="entry name" value="Ribosomal_L13"/>
    <property type="match status" value="1"/>
</dbReference>
<dbReference type="FunFam" id="3.90.1180.10:FF:000001">
    <property type="entry name" value="50S ribosomal protein L13"/>
    <property type="match status" value="1"/>
</dbReference>
<dbReference type="Gene3D" id="3.90.1180.10">
    <property type="entry name" value="Ribosomal protein L13"/>
    <property type="match status" value="1"/>
</dbReference>
<dbReference type="HAMAP" id="MF_01366">
    <property type="entry name" value="Ribosomal_uL13"/>
    <property type="match status" value="1"/>
</dbReference>
<dbReference type="InterPro" id="IPR005822">
    <property type="entry name" value="Ribosomal_uL13"/>
</dbReference>
<dbReference type="InterPro" id="IPR005823">
    <property type="entry name" value="Ribosomal_uL13_bac-type"/>
</dbReference>
<dbReference type="InterPro" id="IPR023563">
    <property type="entry name" value="Ribosomal_uL13_CS"/>
</dbReference>
<dbReference type="InterPro" id="IPR036899">
    <property type="entry name" value="Ribosomal_uL13_sf"/>
</dbReference>
<dbReference type="NCBIfam" id="TIGR01066">
    <property type="entry name" value="rplM_bact"/>
    <property type="match status" value="1"/>
</dbReference>
<dbReference type="PANTHER" id="PTHR11545:SF2">
    <property type="entry name" value="LARGE RIBOSOMAL SUBUNIT PROTEIN UL13M"/>
    <property type="match status" value="1"/>
</dbReference>
<dbReference type="PANTHER" id="PTHR11545">
    <property type="entry name" value="RIBOSOMAL PROTEIN L13"/>
    <property type="match status" value="1"/>
</dbReference>
<dbReference type="Pfam" id="PF00572">
    <property type="entry name" value="Ribosomal_L13"/>
    <property type="match status" value="1"/>
</dbReference>
<dbReference type="PIRSF" id="PIRSF002181">
    <property type="entry name" value="Ribosomal_L13"/>
    <property type="match status" value="1"/>
</dbReference>
<dbReference type="SUPFAM" id="SSF52161">
    <property type="entry name" value="Ribosomal protein L13"/>
    <property type="match status" value="1"/>
</dbReference>
<dbReference type="PROSITE" id="PS00783">
    <property type="entry name" value="RIBOSOMAL_L13"/>
    <property type="match status" value="1"/>
</dbReference>
<evidence type="ECO:0000255" key="1">
    <source>
        <dbReference type="HAMAP-Rule" id="MF_01366"/>
    </source>
</evidence>
<evidence type="ECO:0000305" key="2"/>
<keyword id="KW-1185">Reference proteome</keyword>
<keyword id="KW-0687">Ribonucleoprotein</keyword>
<keyword id="KW-0689">Ribosomal protein</keyword>
<name>RL13_LACPL</name>
<sequence length="147" mass="16169">MRTTYMAKPGEIDRKWYVVDATDVPLGRLSTVVASILRGKNKPTFTPNVDTGDNVIVINASKVALTGKKAERKIYYHHTAYAGGLKERTAGDFLAKEPTKLIETSVKGMLPHNSLGHKMGLKLHVYAGAEHTQQAQKPEVLDITNLI</sequence>
<feature type="chain" id="PRO_0000261736" description="Large ribosomal subunit protein uL13">
    <location>
        <begin position="1"/>
        <end position="147"/>
    </location>
</feature>
<organism>
    <name type="scientific">Lactiplantibacillus plantarum (strain ATCC BAA-793 / NCIMB 8826 / WCFS1)</name>
    <name type="common">Lactobacillus plantarum</name>
    <dbReference type="NCBI Taxonomy" id="220668"/>
    <lineage>
        <taxon>Bacteria</taxon>
        <taxon>Bacillati</taxon>
        <taxon>Bacillota</taxon>
        <taxon>Bacilli</taxon>
        <taxon>Lactobacillales</taxon>
        <taxon>Lactobacillaceae</taxon>
        <taxon>Lactiplantibacillus</taxon>
    </lineage>
</organism>
<protein>
    <recommendedName>
        <fullName evidence="1">Large ribosomal subunit protein uL13</fullName>
    </recommendedName>
    <alternativeName>
        <fullName evidence="2">50S ribosomal protein L13</fullName>
    </alternativeName>
</protein>
<reference key="1">
    <citation type="journal article" date="2003" name="Proc. Natl. Acad. Sci. U.S.A.">
        <title>Complete genome sequence of Lactobacillus plantarum WCFS1.</title>
        <authorList>
            <person name="Kleerebezem M."/>
            <person name="Boekhorst J."/>
            <person name="van Kranenburg R."/>
            <person name="Molenaar D."/>
            <person name="Kuipers O.P."/>
            <person name="Leer R."/>
            <person name="Tarchini R."/>
            <person name="Peters S.A."/>
            <person name="Sandbrink H.M."/>
            <person name="Fiers M.W.E.J."/>
            <person name="Stiekema W."/>
            <person name="Klein Lankhorst R.M."/>
            <person name="Bron P.A."/>
            <person name="Hoffer S.M."/>
            <person name="Nierop Groot M.N."/>
            <person name="Kerkhoven R."/>
            <person name="De Vries M."/>
            <person name="Ursing B."/>
            <person name="De Vos W.M."/>
            <person name="Siezen R.J."/>
        </authorList>
    </citation>
    <scope>NUCLEOTIDE SEQUENCE [LARGE SCALE GENOMIC DNA]</scope>
    <source>
        <strain>ATCC BAA-793 / NCIMB 8826 / WCFS1</strain>
    </source>
</reference>
<reference key="2">
    <citation type="journal article" date="2012" name="J. Bacteriol.">
        <title>Complete resequencing and reannotation of the Lactobacillus plantarum WCFS1 genome.</title>
        <authorList>
            <person name="Siezen R.J."/>
            <person name="Francke C."/>
            <person name="Renckens B."/>
            <person name="Boekhorst J."/>
            <person name="Wels M."/>
            <person name="Kleerebezem M."/>
            <person name="van Hijum S.A."/>
        </authorList>
    </citation>
    <scope>NUCLEOTIDE SEQUENCE [LARGE SCALE GENOMIC DNA]</scope>
    <scope>GENOME REANNOTATION</scope>
    <source>
        <strain>ATCC BAA-793 / NCIMB 8826 / WCFS1</strain>
    </source>
</reference>
<proteinExistence type="inferred from homology"/>
<accession>Q88XU8</accession>
<accession>F9UMP4</accession>